<name>RL25_SHESW</name>
<gene>
    <name evidence="1" type="primary">rplY</name>
    <name type="ordered locus">Sputw3181_2113</name>
</gene>
<organism>
    <name type="scientific">Shewanella sp. (strain W3-18-1)</name>
    <dbReference type="NCBI Taxonomy" id="351745"/>
    <lineage>
        <taxon>Bacteria</taxon>
        <taxon>Pseudomonadati</taxon>
        <taxon>Pseudomonadota</taxon>
        <taxon>Gammaproteobacteria</taxon>
        <taxon>Alteromonadales</taxon>
        <taxon>Shewanellaceae</taxon>
        <taxon>Shewanella</taxon>
    </lineage>
</organism>
<proteinExistence type="inferred from homology"/>
<reference key="1">
    <citation type="submission" date="2006-12" db="EMBL/GenBank/DDBJ databases">
        <title>Complete sequence of Shewanella sp. W3-18-1.</title>
        <authorList>
            <consortium name="US DOE Joint Genome Institute"/>
            <person name="Copeland A."/>
            <person name="Lucas S."/>
            <person name="Lapidus A."/>
            <person name="Barry K."/>
            <person name="Detter J.C."/>
            <person name="Glavina del Rio T."/>
            <person name="Hammon N."/>
            <person name="Israni S."/>
            <person name="Dalin E."/>
            <person name="Tice H."/>
            <person name="Pitluck S."/>
            <person name="Chain P."/>
            <person name="Malfatti S."/>
            <person name="Shin M."/>
            <person name="Vergez L."/>
            <person name="Schmutz J."/>
            <person name="Larimer F."/>
            <person name="Land M."/>
            <person name="Hauser L."/>
            <person name="Kyrpides N."/>
            <person name="Lykidis A."/>
            <person name="Tiedje J."/>
            <person name="Richardson P."/>
        </authorList>
    </citation>
    <scope>NUCLEOTIDE SEQUENCE [LARGE SCALE GENOMIC DNA]</scope>
    <source>
        <strain>W3-18-1</strain>
    </source>
</reference>
<sequence length="95" mass="10685">MSYTIQAQTRTEIGKGSSRRLRHAGKVPAVIYGQGKEPVSIVFEHKDIINIQANEDFYTSVVTIVLDGKEVGVRAQAMQRHVFKPIIEHVDFVYA</sequence>
<protein>
    <recommendedName>
        <fullName evidence="1">Large ribosomal subunit protein bL25</fullName>
    </recommendedName>
    <alternativeName>
        <fullName evidence="2">50S ribosomal protein L25</fullName>
    </alternativeName>
</protein>
<comment type="function">
    <text evidence="1">This is one of the proteins that binds to the 5S RNA in the ribosome where it forms part of the central protuberance.</text>
</comment>
<comment type="subunit">
    <text evidence="1">Part of the 50S ribosomal subunit; part of the 5S rRNA/L5/L18/L25 subcomplex. Contacts the 5S rRNA. Binds to the 5S rRNA independently of L5 and L18.</text>
</comment>
<comment type="similarity">
    <text evidence="1">Belongs to the bacterial ribosomal protein bL25 family.</text>
</comment>
<dbReference type="EMBL" id="CP000503">
    <property type="protein sequence ID" value="ABM24941.1"/>
    <property type="molecule type" value="Genomic_DNA"/>
</dbReference>
<dbReference type="RefSeq" id="WP_011789412.1">
    <property type="nucleotide sequence ID" value="NC_008750.1"/>
</dbReference>
<dbReference type="SMR" id="A1RJU6"/>
<dbReference type="GeneID" id="67443463"/>
<dbReference type="KEGG" id="shw:Sputw3181_2113"/>
<dbReference type="HOGENOM" id="CLU_137946_0_0_6"/>
<dbReference type="Proteomes" id="UP000002597">
    <property type="component" value="Chromosome"/>
</dbReference>
<dbReference type="GO" id="GO:0022625">
    <property type="term" value="C:cytosolic large ribosomal subunit"/>
    <property type="evidence" value="ECO:0007669"/>
    <property type="project" value="TreeGrafter"/>
</dbReference>
<dbReference type="GO" id="GO:0008097">
    <property type="term" value="F:5S rRNA binding"/>
    <property type="evidence" value="ECO:0007669"/>
    <property type="project" value="InterPro"/>
</dbReference>
<dbReference type="GO" id="GO:0003735">
    <property type="term" value="F:structural constituent of ribosome"/>
    <property type="evidence" value="ECO:0007669"/>
    <property type="project" value="InterPro"/>
</dbReference>
<dbReference type="GO" id="GO:0006412">
    <property type="term" value="P:translation"/>
    <property type="evidence" value="ECO:0007669"/>
    <property type="project" value="UniProtKB-UniRule"/>
</dbReference>
<dbReference type="CDD" id="cd00495">
    <property type="entry name" value="Ribosomal_L25_TL5_CTC"/>
    <property type="match status" value="1"/>
</dbReference>
<dbReference type="FunFam" id="2.40.240.10:FF:000002">
    <property type="entry name" value="50S ribosomal protein L25"/>
    <property type="match status" value="1"/>
</dbReference>
<dbReference type="Gene3D" id="2.40.240.10">
    <property type="entry name" value="Ribosomal Protein L25, Chain P"/>
    <property type="match status" value="1"/>
</dbReference>
<dbReference type="HAMAP" id="MF_01336">
    <property type="entry name" value="Ribosomal_bL25"/>
    <property type="match status" value="1"/>
</dbReference>
<dbReference type="InterPro" id="IPR020056">
    <property type="entry name" value="Rbsml_bL25/Gln-tRNA_synth_N"/>
</dbReference>
<dbReference type="InterPro" id="IPR011035">
    <property type="entry name" value="Ribosomal_bL25/Gln-tRNA_synth"/>
</dbReference>
<dbReference type="InterPro" id="IPR001021">
    <property type="entry name" value="Ribosomal_bL25_long"/>
</dbReference>
<dbReference type="InterPro" id="IPR020055">
    <property type="entry name" value="Ribosomal_bL25_short"/>
</dbReference>
<dbReference type="InterPro" id="IPR029751">
    <property type="entry name" value="Ribosomal_L25_dom"/>
</dbReference>
<dbReference type="InterPro" id="IPR020930">
    <property type="entry name" value="Ribosomal_uL5_bac-type"/>
</dbReference>
<dbReference type="NCBIfam" id="TIGR00731">
    <property type="entry name" value="bL25_bact_ctc"/>
    <property type="match status" value="1"/>
</dbReference>
<dbReference type="NCBIfam" id="NF004612">
    <property type="entry name" value="PRK05943.1"/>
    <property type="match status" value="1"/>
</dbReference>
<dbReference type="PANTHER" id="PTHR33284">
    <property type="entry name" value="RIBOSOMAL PROTEIN L25/GLN-TRNA SYNTHETASE, ANTI-CODON-BINDING DOMAIN-CONTAINING PROTEIN"/>
    <property type="match status" value="1"/>
</dbReference>
<dbReference type="PANTHER" id="PTHR33284:SF1">
    <property type="entry name" value="RIBOSOMAL PROTEIN L25_GLN-TRNA SYNTHETASE, ANTI-CODON-BINDING DOMAIN-CONTAINING PROTEIN"/>
    <property type="match status" value="1"/>
</dbReference>
<dbReference type="Pfam" id="PF01386">
    <property type="entry name" value="Ribosomal_L25p"/>
    <property type="match status" value="1"/>
</dbReference>
<dbReference type="SUPFAM" id="SSF50715">
    <property type="entry name" value="Ribosomal protein L25-like"/>
    <property type="match status" value="1"/>
</dbReference>
<accession>A1RJU6</accession>
<keyword id="KW-0687">Ribonucleoprotein</keyword>
<keyword id="KW-0689">Ribosomal protein</keyword>
<keyword id="KW-0694">RNA-binding</keyword>
<keyword id="KW-0699">rRNA-binding</keyword>
<evidence type="ECO:0000255" key="1">
    <source>
        <dbReference type="HAMAP-Rule" id="MF_01336"/>
    </source>
</evidence>
<evidence type="ECO:0000305" key="2"/>
<feature type="chain" id="PRO_1000052971" description="Large ribosomal subunit protein bL25">
    <location>
        <begin position="1"/>
        <end position="95"/>
    </location>
</feature>